<feature type="initiator methionine" description="Removed; by host" evidence="1">
    <location>
        <position position="1"/>
    </location>
</feature>
<feature type="chain" id="PRO_0000316117" description="Gag polyprotein" evidence="1">
    <location>
        <begin position="2"/>
        <end position="519"/>
    </location>
</feature>
<feature type="chain" id="PRO_0000038628" description="Matrix protein p17" evidence="1">
    <location>
        <begin position="2"/>
        <end position="141"/>
    </location>
</feature>
<feature type="chain" id="PRO_0000038629" description="Capsid protein p24" evidence="1">
    <location>
        <begin position="142"/>
        <end position="372"/>
    </location>
</feature>
<feature type="peptide" id="PRO_0000316118" description="Spacer peptide p2" evidence="1">
    <location>
        <begin position="373"/>
        <end position="386"/>
    </location>
</feature>
<feature type="chain" id="PRO_0000038630" description="Nucleocapsid protein p7" evidence="1">
    <location>
        <begin position="387"/>
        <end position="438"/>
    </location>
</feature>
<feature type="peptide" id="PRO_0000316119" description="Spacer peptide p1" evidence="1">
    <location>
        <begin position="439"/>
        <end position="453"/>
    </location>
</feature>
<feature type="chain" id="PRO_0000316120" description="p6-gag" evidence="1">
    <location>
        <begin position="481"/>
        <end position="519"/>
    </location>
</feature>
<feature type="zinc finger region" description="CCHC-type 1" evidence="5">
    <location>
        <begin position="397"/>
        <end position="414"/>
    </location>
</feature>
<feature type="zinc finger region" description="CCHC-type 2" evidence="5">
    <location>
        <begin position="418"/>
        <end position="435"/>
    </location>
</feature>
<feature type="region of interest" description="Disordered" evidence="6">
    <location>
        <begin position="113"/>
        <end position="138"/>
    </location>
</feature>
<feature type="region of interest" description="Disordered" evidence="6">
    <location>
        <begin position="454"/>
        <end position="519"/>
    </location>
</feature>
<feature type="short sequence motif" description="Nuclear export signal" evidence="1">
    <location>
        <begin position="16"/>
        <end position="22"/>
    </location>
</feature>
<feature type="short sequence motif" description="Nuclear localization signal" evidence="1">
    <location>
        <begin position="26"/>
        <end position="32"/>
    </location>
</feature>
<feature type="short sequence motif" description="PTAP/PSAP motif" evidence="3">
    <location>
        <begin position="462"/>
        <end position="465"/>
    </location>
</feature>
<feature type="compositionally biased region" description="Basic and acidic residues" evidence="6">
    <location>
        <begin position="486"/>
        <end position="496"/>
    </location>
</feature>
<feature type="site" description="Cleavage; by viral protease" evidence="1">
    <location>
        <begin position="438"/>
        <end position="439"/>
    </location>
</feature>
<feature type="lipid moiety-binding region" description="N-myristoyl glycine; by host" evidence="1">
    <location>
        <position position="2"/>
    </location>
</feature>
<organismHost>
    <name type="scientific">Cercopithecidae</name>
    <name type="common">Old World monkeys</name>
    <dbReference type="NCBI Taxonomy" id="9527"/>
</organismHost>
<evidence type="ECO:0000250" key="1"/>
<evidence type="ECO:0000250" key="2">
    <source>
        <dbReference type="UniProtKB" id="P04591"/>
    </source>
</evidence>
<evidence type="ECO:0000250" key="3">
    <source>
        <dbReference type="UniProtKB" id="P05893"/>
    </source>
</evidence>
<evidence type="ECO:0000250" key="4">
    <source>
        <dbReference type="UniProtKB" id="P12493"/>
    </source>
</evidence>
<evidence type="ECO:0000255" key="5">
    <source>
        <dbReference type="PROSITE-ProRule" id="PRU00047"/>
    </source>
</evidence>
<evidence type="ECO:0000256" key="6">
    <source>
        <dbReference type="SAM" id="MobiDB-lite"/>
    </source>
</evidence>
<evidence type="ECO:0000305" key="7"/>
<reference key="1">
    <citation type="journal article" date="1988" name="Nature">
        <title>Sequence of simian immunodeficiency virus from African green monkey, a new member of the HIV/SIV group.</title>
        <authorList>
            <person name="Fukasawa M."/>
            <person name="Miura T."/>
            <person name="Hasegawa A."/>
            <person name="Morikawa S."/>
            <person name="Tsujimoto H."/>
            <person name="Miki K."/>
            <person name="Kitamura T."/>
            <person name="Hayami M."/>
        </authorList>
    </citation>
    <scope>NUCLEOTIDE SEQUENCE [GENOMIC DNA]</scope>
</reference>
<keyword id="KW-0167">Capsid protein</keyword>
<keyword id="KW-1035">Host cytoplasm</keyword>
<keyword id="KW-1048">Host nucleus</keyword>
<keyword id="KW-0945">Host-virus interaction</keyword>
<keyword id="KW-0449">Lipoprotein</keyword>
<keyword id="KW-0479">Metal-binding</keyword>
<keyword id="KW-0519">Myristate</keyword>
<keyword id="KW-0597">Phosphoprotein</keyword>
<keyword id="KW-0677">Repeat</keyword>
<keyword id="KW-0688">Ribosomal frameshifting</keyword>
<keyword id="KW-0694">RNA-binding</keyword>
<keyword id="KW-1198">Viral budding</keyword>
<keyword id="KW-1187">Viral budding via the host ESCRT complexes</keyword>
<keyword id="KW-0543">Viral nucleoprotein</keyword>
<keyword id="KW-1188">Viral release from host cell</keyword>
<keyword id="KW-0946">Virion</keyword>
<keyword id="KW-0862">Zinc</keyword>
<keyword id="KW-0863">Zinc-finger</keyword>
<proteinExistence type="inferred from homology"/>
<organism>
    <name type="scientific">Simian immunodeficiency virus agm.vervet (isolate AGM TYO-1)</name>
    <name type="common">SIV-agm.ver</name>
    <name type="synonym">Simian immunodeficiency virus African green monkey vervet</name>
    <dbReference type="NCBI Taxonomy" id="11731"/>
    <lineage>
        <taxon>Viruses</taxon>
        <taxon>Riboviria</taxon>
        <taxon>Pararnavirae</taxon>
        <taxon>Artverviricota</taxon>
        <taxon>Revtraviricetes</taxon>
        <taxon>Ortervirales</taxon>
        <taxon>Retroviridae</taxon>
        <taxon>Orthoretrovirinae</taxon>
        <taxon>Lentivirus</taxon>
        <taxon>Simian immunodeficiency virus</taxon>
    </lineage>
</organism>
<name>GAG_SIVVT</name>
<protein>
    <recommendedName>
        <fullName>Gag polyprotein</fullName>
    </recommendedName>
    <alternativeName>
        <fullName>Pr55Gag</fullName>
    </alternativeName>
    <component>
        <recommendedName>
            <fullName>Matrix protein p17</fullName>
            <shortName>MA</shortName>
        </recommendedName>
    </component>
    <component>
        <recommendedName>
            <fullName>Capsid protein p24</fullName>
            <shortName>CA</shortName>
        </recommendedName>
    </component>
    <component>
        <recommendedName>
            <fullName>Spacer peptide p2</fullName>
        </recommendedName>
    </component>
    <component>
        <recommendedName>
            <fullName>Nucleocapsid protein p7</fullName>
            <shortName>NC</shortName>
        </recommendedName>
    </component>
    <component>
        <recommendedName>
            <fullName>Spacer peptide p1</fullName>
        </recommendedName>
    </component>
    <component>
        <recommendedName>
            <fullName>p6-gag</fullName>
        </recommendedName>
    </component>
</protein>
<accession>P05892</accession>
<sequence length="519" mass="58143">MGAATSALNRRQLDQFEKIRLRPNGKKKYQIKHLIWAGKEMERFGLHERLLETEEGCKRIIEVLYPLEPTGSEGLKSLFNLVCVLYCLHKEQKVKDTEEAVATVRQHCHLVEKEKSATETSSGQKKNDKGIAAPPGCSQNFPAQQQGNAWVHVPLSPRTLNAWVKAVEEKKFGAEIVPMFQALSEGCTPYDINQMLNVLGDHQGALQIVKEIINEEAAQWDVTHPLPAGPLPAGQLRDPRGSDIAGTTSSVQEQLEWIYTANPRVDVGAIYRRWIILGLQKCVKMYNPVSVLDIRQGPKEPFKDYVDRFYKAIRAEQASGEVKQWMTESLLIQNANPDCKVILKGLGMHPTLEEMLTACQGVGGPSYKAKVMAEMMQTMQNQNMVQQGGPKRQRPPLRCYNCGKFGHMQRQCPEPRKTKCLKCGKLGHLAKDCRGQVNFLGYGRWMGAKPRNFPAATLGAEPSAPPPPSGTTPYDPAKKLLQQYAEKGKQLREQKRNPPAMNPDWTEGYSLNSLFGEDQ</sequence>
<comment type="function">
    <text evidence="1">Matrix protein p17 targets Gag and Gag-Pol polyproteins to the plasma membrane via a multipartite membrane binding signal, that includes its myristoylated N-terminus. Also mediates nuclear localization of the preintegration complex. Implicated in the release from host cell mediated by Vpu (By similarity).</text>
</comment>
<comment type="function">
    <text evidence="1">Capsid protein p24 forms the conical core of the virus that encapsulates the genomic RNA-nucleocapsid complex.</text>
</comment>
<comment type="function">
    <text evidence="1">Nucleocapsid protein p7 encapsulates and protects viral dimeric unspliced (genomic) RNA. Binds these RNAs through its zinc fingers (By similarity).</text>
</comment>
<comment type="function">
    <text evidence="1">p6-gag plays a role in budding of the assembled particle by interacting with the host class E VPS proteins TSG101 and PDCD6IP/AIP1.</text>
</comment>
<comment type="subunit">
    <molecule>Matrix protein p17</molecule>
    <text evidence="2 4">Homotrimer. Interacts with gp41 (via C-terminus).</text>
</comment>
<comment type="subunit">
    <molecule>p6-gag</molecule>
    <text evidence="4">Interacts with host TSG101 (By similarity).</text>
</comment>
<comment type="subcellular location">
    <molecule>Matrix protein p17</molecule>
    <subcellularLocation>
        <location evidence="7">Virion</location>
    </subcellularLocation>
    <subcellularLocation>
        <location evidence="1">Host nucleus</location>
    </subcellularLocation>
    <subcellularLocation>
        <location evidence="1">Host cytoplasm</location>
    </subcellularLocation>
    <text evidence="1">Following virus entry, the nuclear localization signal (NLS) of the matrix protein participates with Vpr to the nuclear localization of the viral genome. During virus production, the nuclear export activity of the matrix protein counteracts the NLS to maintain the Gag and Gag-Pol polyproteins in the cytoplasm, thereby directing unspliced RNA to the plasma membrane (By similarity).</text>
</comment>
<comment type="subcellular location">
    <molecule>Capsid protein p24</molecule>
    <subcellularLocation>
        <location evidence="7">Virion</location>
    </subcellularLocation>
</comment>
<comment type="subcellular location">
    <molecule>Nucleocapsid protein p7</molecule>
    <subcellularLocation>
        <location evidence="7">Virion</location>
    </subcellularLocation>
</comment>
<comment type="alternative products">
    <event type="ribosomal frameshifting"/>
    <isoform>
        <id>P05892-1</id>
        <name>Gag polyprotein</name>
        <sequence type="displayed"/>
    </isoform>
    <isoform>
        <id>P05895-1</id>
        <name>Gag-Pol polyprotein</name>
        <sequence type="external"/>
    </isoform>
    <text>Translation results in the formation of the Gag polyprotein most of the time. Ribosomal frameshifting at the gag-pol genes boundary occurs at low frequency and produces the Gag-Pol polyprotein. This strategy of translation probably allows the virus to modulate the quantity of each viral protein. Maintenance of a correct Gag to Gag-Pol ratio is essential for RNA dimerization and viral infectivity.</text>
</comment>
<comment type="domain">
    <text evidence="3">Late-budding domains (L domains) are short sequence motifs essential for viral particle budding. They recruit proteins of the host ESCRT machinery (Endosomal Sorting Complex Required for Transport) or ESCRT-associated proteins. p6-gag contains one L domain: a PTAP/PSAP motif, which interacts with the UEV domain of TSG101.</text>
</comment>
<comment type="PTM">
    <text evidence="1">Capsid protein p24 is phosphorylated.</text>
</comment>
<comment type="PTM">
    <text evidence="1">Specific enzymatic cleavages by the viral protease yield mature proteins. The polyprotein is cleaved during and after budding, this process is termed maturation (By similarity).</text>
</comment>
<comment type="miscellaneous">
    <text>This is an African green monkey isolate.</text>
</comment>
<comment type="miscellaneous">
    <molecule>Isoform Gag polyprotein</molecule>
    <text>Produced by conventional translation.</text>
</comment>
<comment type="similarity">
    <text evidence="7">Belongs to the primate lentivirus group gag polyprotein family.</text>
</comment>
<dbReference type="EMBL" id="X07805">
    <property type="protein sequence ID" value="CAA30657.1"/>
    <property type="molecule type" value="Genomic_DNA"/>
</dbReference>
<dbReference type="SMR" id="P05892"/>
<dbReference type="PRO" id="PR:P05892"/>
<dbReference type="GO" id="GO:0030430">
    <property type="term" value="C:host cell cytoplasm"/>
    <property type="evidence" value="ECO:0007669"/>
    <property type="project" value="UniProtKB-SubCell"/>
</dbReference>
<dbReference type="GO" id="GO:0042025">
    <property type="term" value="C:host cell nucleus"/>
    <property type="evidence" value="ECO:0007669"/>
    <property type="project" value="UniProtKB-SubCell"/>
</dbReference>
<dbReference type="GO" id="GO:0019013">
    <property type="term" value="C:viral nucleocapsid"/>
    <property type="evidence" value="ECO:0007669"/>
    <property type="project" value="UniProtKB-KW"/>
</dbReference>
<dbReference type="GO" id="GO:0003723">
    <property type="term" value="F:RNA binding"/>
    <property type="evidence" value="ECO:0007669"/>
    <property type="project" value="UniProtKB-KW"/>
</dbReference>
<dbReference type="GO" id="GO:0005198">
    <property type="term" value="F:structural molecule activity"/>
    <property type="evidence" value="ECO:0007669"/>
    <property type="project" value="InterPro"/>
</dbReference>
<dbReference type="GO" id="GO:0008270">
    <property type="term" value="F:zinc ion binding"/>
    <property type="evidence" value="ECO:0007669"/>
    <property type="project" value="UniProtKB-KW"/>
</dbReference>
<dbReference type="GO" id="GO:0039702">
    <property type="term" value="P:viral budding via host ESCRT complex"/>
    <property type="evidence" value="ECO:0007669"/>
    <property type="project" value="UniProtKB-KW"/>
</dbReference>
<dbReference type="GO" id="GO:0075523">
    <property type="term" value="P:viral translational frameshifting"/>
    <property type="evidence" value="ECO:0007669"/>
    <property type="project" value="UniProtKB-KW"/>
</dbReference>
<dbReference type="Gene3D" id="1.10.1200.30">
    <property type="match status" value="1"/>
</dbReference>
<dbReference type="Gene3D" id="1.10.375.10">
    <property type="entry name" value="Human Immunodeficiency Virus Type 1 Capsid Protein"/>
    <property type="match status" value="1"/>
</dbReference>
<dbReference type="Gene3D" id="1.10.150.90">
    <property type="entry name" value="Immunodeficiency lentiviruses, gag gene matrix protein p17"/>
    <property type="match status" value="1"/>
</dbReference>
<dbReference type="Gene3D" id="1.20.5.760">
    <property type="entry name" value="Single helix bin"/>
    <property type="match status" value="1"/>
</dbReference>
<dbReference type="Gene3D" id="4.10.60.10">
    <property type="entry name" value="Zinc finger, CCHC-type"/>
    <property type="match status" value="1"/>
</dbReference>
<dbReference type="InterPro" id="IPR045345">
    <property type="entry name" value="Gag_p24_C"/>
</dbReference>
<dbReference type="InterPro" id="IPR000071">
    <property type="entry name" value="Lentvrl_matrix_N"/>
</dbReference>
<dbReference type="InterPro" id="IPR012344">
    <property type="entry name" value="Matrix_HIV/RSV_N"/>
</dbReference>
<dbReference type="InterPro" id="IPR050195">
    <property type="entry name" value="Primate_lentivir_Gag_pol-like"/>
</dbReference>
<dbReference type="InterPro" id="IPR008916">
    <property type="entry name" value="Retrov_capsid_C"/>
</dbReference>
<dbReference type="InterPro" id="IPR008919">
    <property type="entry name" value="Retrov_capsid_N"/>
</dbReference>
<dbReference type="InterPro" id="IPR010999">
    <property type="entry name" value="Retrovr_matrix"/>
</dbReference>
<dbReference type="InterPro" id="IPR001878">
    <property type="entry name" value="Znf_CCHC"/>
</dbReference>
<dbReference type="InterPro" id="IPR036875">
    <property type="entry name" value="Znf_CCHC_sf"/>
</dbReference>
<dbReference type="PANTHER" id="PTHR40389">
    <property type="entry name" value="ENDOGENOUS RETROVIRUS GROUP K MEMBER 24 GAG POLYPROTEIN-RELATED"/>
    <property type="match status" value="1"/>
</dbReference>
<dbReference type="PANTHER" id="PTHR40389:SF3">
    <property type="entry name" value="IGE-BINDING PROTEIN"/>
    <property type="match status" value="1"/>
</dbReference>
<dbReference type="Pfam" id="PF00540">
    <property type="entry name" value="Gag_p17"/>
    <property type="match status" value="1"/>
</dbReference>
<dbReference type="Pfam" id="PF00607">
    <property type="entry name" value="Gag_p24"/>
    <property type="match status" value="1"/>
</dbReference>
<dbReference type="Pfam" id="PF19317">
    <property type="entry name" value="Gag_p24_C"/>
    <property type="match status" value="1"/>
</dbReference>
<dbReference type="Pfam" id="PF00098">
    <property type="entry name" value="zf-CCHC"/>
    <property type="match status" value="2"/>
</dbReference>
<dbReference type="PRINTS" id="PR00234">
    <property type="entry name" value="HIV1MATRIX"/>
</dbReference>
<dbReference type="SMART" id="SM00343">
    <property type="entry name" value="ZnF_C2HC"/>
    <property type="match status" value="2"/>
</dbReference>
<dbReference type="SUPFAM" id="SSF47836">
    <property type="entry name" value="Retroviral matrix proteins"/>
    <property type="match status" value="1"/>
</dbReference>
<dbReference type="SUPFAM" id="SSF47353">
    <property type="entry name" value="Retrovirus capsid dimerization domain-like"/>
    <property type="match status" value="1"/>
</dbReference>
<dbReference type="SUPFAM" id="SSF47943">
    <property type="entry name" value="Retrovirus capsid protein, N-terminal core domain"/>
    <property type="match status" value="1"/>
</dbReference>
<dbReference type="SUPFAM" id="SSF57756">
    <property type="entry name" value="Retrovirus zinc finger-like domains"/>
    <property type="match status" value="1"/>
</dbReference>
<dbReference type="PROSITE" id="PS50158">
    <property type="entry name" value="ZF_CCHC"/>
    <property type="match status" value="2"/>
</dbReference>
<gene>
    <name type="primary">gag</name>
</gene>